<reference key="1">
    <citation type="journal article" date="2005" name="J. Bacteriol.">
        <title>Whole-genome sequencing of Staphylococcus haemolyticus uncovers the extreme plasticity of its genome and the evolution of human-colonizing staphylococcal species.</title>
        <authorList>
            <person name="Takeuchi F."/>
            <person name="Watanabe S."/>
            <person name="Baba T."/>
            <person name="Yuzawa H."/>
            <person name="Ito T."/>
            <person name="Morimoto Y."/>
            <person name="Kuroda M."/>
            <person name="Cui L."/>
            <person name="Takahashi M."/>
            <person name="Ankai A."/>
            <person name="Baba S."/>
            <person name="Fukui S."/>
            <person name="Lee J.C."/>
            <person name="Hiramatsu K."/>
        </authorList>
    </citation>
    <scope>NUCLEOTIDE SEQUENCE [LARGE SCALE GENOMIC DNA]</scope>
    <source>
        <strain>JCSC1435</strain>
    </source>
</reference>
<feature type="chain" id="PRO_1000000689" description="Thymidylate synthase">
    <location>
        <begin position="1"/>
        <end position="318"/>
    </location>
</feature>
<feature type="active site" description="Nucleophile" evidence="1">
    <location>
        <position position="201"/>
    </location>
</feature>
<feature type="binding site" description="in other chain" evidence="1">
    <location>
        <position position="26"/>
    </location>
    <ligand>
        <name>dUMP</name>
        <dbReference type="ChEBI" id="CHEBI:246422"/>
        <note>ligand shared between dimeric partners</note>
    </ligand>
</feature>
<feature type="binding site" evidence="1">
    <location>
        <begin position="181"/>
        <end position="182"/>
    </location>
    <ligand>
        <name>dUMP</name>
        <dbReference type="ChEBI" id="CHEBI:246422"/>
        <note>ligand shared between dimeric partners</note>
    </ligand>
</feature>
<feature type="binding site" description="in other chain" evidence="1">
    <location>
        <begin position="221"/>
        <end position="224"/>
    </location>
    <ligand>
        <name>dUMP</name>
        <dbReference type="ChEBI" id="CHEBI:246422"/>
        <note>ligand shared between dimeric partners</note>
    </ligand>
</feature>
<feature type="binding site" evidence="1">
    <location>
        <position position="224"/>
    </location>
    <ligand>
        <name>(6R)-5,10-methylene-5,6,7,8-tetrahydrofolate</name>
        <dbReference type="ChEBI" id="CHEBI:15636"/>
    </ligand>
</feature>
<feature type="binding site" description="in other chain" evidence="1">
    <location>
        <position position="232"/>
    </location>
    <ligand>
        <name>dUMP</name>
        <dbReference type="ChEBI" id="CHEBI:246422"/>
        <note>ligand shared between dimeric partners</note>
    </ligand>
</feature>
<feature type="binding site" description="in other chain" evidence="1">
    <location>
        <begin position="262"/>
        <end position="264"/>
    </location>
    <ligand>
        <name>dUMP</name>
        <dbReference type="ChEBI" id="CHEBI:246422"/>
        <note>ligand shared between dimeric partners</note>
    </ligand>
</feature>
<feature type="binding site" evidence="1">
    <location>
        <position position="317"/>
    </location>
    <ligand>
        <name>(6R)-5,10-methylene-5,6,7,8-tetrahydrofolate</name>
        <dbReference type="ChEBI" id="CHEBI:15636"/>
    </ligand>
</feature>
<evidence type="ECO:0000255" key="1">
    <source>
        <dbReference type="HAMAP-Rule" id="MF_00008"/>
    </source>
</evidence>
<organism>
    <name type="scientific">Staphylococcus haemolyticus (strain JCSC1435)</name>
    <dbReference type="NCBI Taxonomy" id="279808"/>
    <lineage>
        <taxon>Bacteria</taxon>
        <taxon>Bacillati</taxon>
        <taxon>Bacillota</taxon>
        <taxon>Bacilli</taxon>
        <taxon>Bacillales</taxon>
        <taxon>Staphylococcaceae</taxon>
        <taxon>Staphylococcus</taxon>
    </lineage>
</organism>
<keyword id="KW-0963">Cytoplasm</keyword>
<keyword id="KW-0489">Methyltransferase</keyword>
<keyword id="KW-0545">Nucleotide biosynthesis</keyword>
<keyword id="KW-0808">Transferase</keyword>
<accession>Q4L6D7</accession>
<sequence>MLNSFDSAYHALCEEILEIGNQRDDRTHTGTFSKFGHQLRFDLSKGFPLLTTKKVSFKLIATELLWFIKGDTNIQYLLKYNNNIWNEWAFEKYVQSNDYHGPDMTNFGHRALQDDEFNELYKEEMSKFKQHILNDDSFAKKYGDLGNVYGKQWRDWVDKEGNHFDQLKTVIEQIKNSPNSRRHIVSAWNPTEIDSMALPPCHTMFQFYVQDGRLSCQLYQRSADIFLGVPFNIASYALLTHLIAKECNLEVGEFVHTFGDAHIYSNHIEAIKTQLSRNSFDPPTLKINSNASIFDINYEDLELIGYNSHPAIKAPIAV</sequence>
<comment type="function">
    <text evidence="1">Catalyzes the reductive methylation of 2'-deoxyuridine-5'-monophosphate (dUMP) to 2'-deoxythymidine-5'-monophosphate (dTMP) while utilizing 5,10-methylenetetrahydrofolate (mTHF) as the methyl donor and reductant in the reaction, yielding dihydrofolate (DHF) as a by-product. This enzymatic reaction provides an intracellular de novo source of dTMP, an essential precursor for DNA biosynthesis.</text>
</comment>
<comment type="catalytic activity">
    <reaction evidence="1">
        <text>dUMP + (6R)-5,10-methylene-5,6,7,8-tetrahydrofolate = 7,8-dihydrofolate + dTMP</text>
        <dbReference type="Rhea" id="RHEA:12104"/>
        <dbReference type="ChEBI" id="CHEBI:15636"/>
        <dbReference type="ChEBI" id="CHEBI:57451"/>
        <dbReference type="ChEBI" id="CHEBI:63528"/>
        <dbReference type="ChEBI" id="CHEBI:246422"/>
        <dbReference type="EC" id="2.1.1.45"/>
    </reaction>
</comment>
<comment type="pathway">
    <text evidence="1">Pyrimidine metabolism; dTTP biosynthesis.</text>
</comment>
<comment type="subunit">
    <text evidence="1">Homodimer.</text>
</comment>
<comment type="subcellular location">
    <subcellularLocation>
        <location evidence="1">Cytoplasm</location>
    </subcellularLocation>
</comment>
<comment type="similarity">
    <text evidence="1">Belongs to the thymidylate synthase family. Bacterial-type ThyA subfamily.</text>
</comment>
<name>TYSY_STAHJ</name>
<dbReference type="EC" id="2.1.1.45" evidence="1"/>
<dbReference type="EMBL" id="AP006716">
    <property type="protein sequence ID" value="BAE04788.1"/>
    <property type="molecule type" value="Genomic_DNA"/>
</dbReference>
<dbReference type="RefSeq" id="WP_011275774.1">
    <property type="nucleotide sequence ID" value="NC_007168.1"/>
</dbReference>
<dbReference type="SMR" id="Q4L6D7"/>
<dbReference type="KEGG" id="sha:SH1479"/>
<dbReference type="eggNOG" id="COG0207">
    <property type="taxonomic scope" value="Bacteria"/>
</dbReference>
<dbReference type="HOGENOM" id="CLU_021669_0_0_9"/>
<dbReference type="OrthoDB" id="9774633at2"/>
<dbReference type="UniPathway" id="UPA00575"/>
<dbReference type="Proteomes" id="UP000000543">
    <property type="component" value="Chromosome"/>
</dbReference>
<dbReference type="GO" id="GO:0005829">
    <property type="term" value="C:cytosol"/>
    <property type="evidence" value="ECO:0007669"/>
    <property type="project" value="TreeGrafter"/>
</dbReference>
<dbReference type="GO" id="GO:0004799">
    <property type="term" value="F:thymidylate synthase activity"/>
    <property type="evidence" value="ECO:0007669"/>
    <property type="project" value="UniProtKB-UniRule"/>
</dbReference>
<dbReference type="GO" id="GO:0006231">
    <property type="term" value="P:dTMP biosynthetic process"/>
    <property type="evidence" value="ECO:0007669"/>
    <property type="project" value="UniProtKB-UniRule"/>
</dbReference>
<dbReference type="GO" id="GO:0006235">
    <property type="term" value="P:dTTP biosynthetic process"/>
    <property type="evidence" value="ECO:0007669"/>
    <property type="project" value="UniProtKB-UniRule"/>
</dbReference>
<dbReference type="GO" id="GO:0032259">
    <property type="term" value="P:methylation"/>
    <property type="evidence" value="ECO:0007669"/>
    <property type="project" value="UniProtKB-KW"/>
</dbReference>
<dbReference type="CDD" id="cd00351">
    <property type="entry name" value="TS_Pyrimidine_HMase"/>
    <property type="match status" value="1"/>
</dbReference>
<dbReference type="Gene3D" id="3.30.572.10">
    <property type="entry name" value="Thymidylate synthase/dCMP hydroxymethylase domain"/>
    <property type="match status" value="1"/>
</dbReference>
<dbReference type="HAMAP" id="MF_00008">
    <property type="entry name" value="Thymidy_synth_bact"/>
    <property type="match status" value="1"/>
</dbReference>
<dbReference type="InterPro" id="IPR045097">
    <property type="entry name" value="Thymidate_synth/dCMP_Mease"/>
</dbReference>
<dbReference type="InterPro" id="IPR023451">
    <property type="entry name" value="Thymidate_synth/dCMP_Mease_dom"/>
</dbReference>
<dbReference type="InterPro" id="IPR036926">
    <property type="entry name" value="Thymidate_synth/dCMP_Mease_sf"/>
</dbReference>
<dbReference type="InterPro" id="IPR000398">
    <property type="entry name" value="Thymidylate_synthase"/>
</dbReference>
<dbReference type="InterPro" id="IPR020940">
    <property type="entry name" value="Thymidylate_synthase_AS"/>
</dbReference>
<dbReference type="NCBIfam" id="NF002496">
    <property type="entry name" value="PRK01827.1-2"/>
    <property type="match status" value="1"/>
</dbReference>
<dbReference type="NCBIfam" id="TIGR03284">
    <property type="entry name" value="thym_sym"/>
    <property type="match status" value="1"/>
</dbReference>
<dbReference type="PANTHER" id="PTHR11548:SF9">
    <property type="entry name" value="THYMIDYLATE SYNTHASE"/>
    <property type="match status" value="1"/>
</dbReference>
<dbReference type="PANTHER" id="PTHR11548">
    <property type="entry name" value="THYMIDYLATE SYNTHASE 1"/>
    <property type="match status" value="1"/>
</dbReference>
<dbReference type="Pfam" id="PF00303">
    <property type="entry name" value="Thymidylat_synt"/>
    <property type="match status" value="1"/>
</dbReference>
<dbReference type="PRINTS" id="PR00108">
    <property type="entry name" value="THYMDSNTHASE"/>
</dbReference>
<dbReference type="SUPFAM" id="SSF55831">
    <property type="entry name" value="Thymidylate synthase/dCMP hydroxymethylase"/>
    <property type="match status" value="1"/>
</dbReference>
<dbReference type="PROSITE" id="PS00091">
    <property type="entry name" value="THYMIDYLATE_SYNTHASE"/>
    <property type="match status" value="1"/>
</dbReference>
<proteinExistence type="inferred from homology"/>
<gene>
    <name evidence="1" type="primary">thyA</name>
    <name type="ordered locus">SH1479</name>
</gene>
<protein>
    <recommendedName>
        <fullName evidence="1">Thymidylate synthase</fullName>
        <shortName evidence="1">TS</shortName>
        <shortName evidence="1">TSase</shortName>
        <ecNumber evidence="1">2.1.1.45</ecNumber>
    </recommendedName>
</protein>